<feature type="chain" id="PRO_0000283497" description="FBD-associated F-box protein At4g10400">
    <location>
        <begin position="1"/>
        <end position="409"/>
    </location>
</feature>
<feature type="domain" description="F-box" evidence="1">
    <location>
        <begin position="1"/>
        <end position="47"/>
    </location>
</feature>
<feature type="domain" description="FBD">
    <location>
        <begin position="330"/>
        <end position="379"/>
    </location>
</feature>
<feature type="splice variant" id="VSP_024320" description="In isoform 2." evidence="2">
    <original>DHENLGMLSWNQPSIVPECMLSSLQKFTWFKYLGRPQDRDIAVYILKNACRLRTATIKSDTRLFTKLEMITELRLSSQASSTCELNFS</original>
    <variation>VSFFH</variation>
    <location>
        <begin position="322"/>
        <end position="409"/>
    </location>
</feature>
<feature type="sequence conflict" description="In Ref. 3; BT011990." evidence="3" ref="3">
    <original>N</original>
    <variation>K</variation>
    <location>
        <position position="299"/>
    </location>
</feature>
<proteinExistence type="evidence at transcript level"/>
<keyword id="KW-0025">Alternative splicing</keyword>
<keyword id="KW-1185">Reference proteome</keyword>
<dbReference type="EMBL" id="AL049488">
    <property type="protein sequence ID" value="CAB39793.1"/>
    <property type="molecule type" value="Genomic_DNA"/>
</dbReference>
<dbReference type="EMBL" id="AL161517">
    <property type="protein sequence ID" value="CAB78163.1"/>
    <property type="molecule type" value="Genomic_DNA"/>
</dbReference>
<dbReference type="EMBL" id="CP002687">
    <property type="protein sequence ID" value="AEE82876.1"/>
    <property type="molecule type" value="Genomic_DNA"/>
</dbReference>
<dbReference type="EMBL" id="CP002687">
    <property type="protein sequence ID" value="AEE82877.1"/>
    <property type="molecule type" value="Genomic_DNA"/>
</dbReference>
<dbReference type="EMBL" id="CP002687">
    <property type="protein sequence ID" value="ANM67792.1"/>
    <property type="molecule type" value="Genomic_DNA"/>
</dbReference>
<dbReference type="EMBL" id="BT011990">
    <property type="status" value="NOT_ANNOTATED_CDS"/>
    <property type="molecule type" value="mRNA"/>
</dbReference>
<dbReference type="PIR" id="T04055">
    <property type="entry name" value="T04055"/>
</dbReference>
<dbReference type="RefSeq" id="NP_001078367.1">
    <molecule id="Q9SV82-1"/>
    <property type="nucleotide sequence ID" value="NM_001084898.2"/>
</dbReference>
<dbReference type="RefSeq" id="NP_001319893.1">
    <molecule id="Q9SV82-1"/>
    <property type="nucleotide sequence ID" value="NM_001340663.1"/>
</dbReference>
<dbReference type="RefSeq" id="NP_192778.2">
    <molecule id="Q9SV82-1"/>
    <property type="nucleotide sequence ID" value="NM_117108.5"/>
</dbReference>
<dbReference type="BioGRID" id="11931">
    <property type="interactions" value="4"/>
</dbReference>
<dbReference type="FunCoup" id="Q9SV82">
    <property type="interactions" value="122"/>
</dbReference>
<dbReference type="IntAct" id="Q9SV82">
    <property type="interactions" value="1"/>
</dbReference>
<dbReference type="STRING" id="3702.Q9SV82"/>
<dbReference type="iPTMnet" id="Q9SV82"/>
<dbReference type="PaxDb" id="3702-AT4G10400.1"/>
<dbReference type="ProteomicsDB" id="232052">
    <molecule id="Q9SV82-1"/>
</dbReference>
<dbReference type="DNASU" id="826632"/>
<dbReference type="EnsemblPlants" id="AT4G10400.1">
    <molecule id="Q9SV82-1"/>
    <property type="protein sequence ID" value="AT4G10400.1"/>
    <property type="gene ID" value="AT4G10400"/>
</dbReference>
<dbReference type="EnsemblPlants" id="AT4G10400.2">
    <molecule id="Q9SV82-1"/>
    <property type="protein sequence ID" value="AT4G10400.2"/>
    <property type="gene ID" value="AT4G10400"/>
</dbReference>
<dbReference type="EnsemblPlants" id="AT4G10400.3">
    <molecule id="Q9SV82-1"/>
    <property type="protein sequence ID" value="AT4G10400.3"/>
    <property type="gene ID" value="AT4G10400"/>
</dbReference>
<dbReference type="GeneID" id="826632"/>
<dbReference type="Gramene" id="AT4G10400.1">
    <molecule id="Q9SV82-1"/>
    <property type="protein sequence ID" value="AT4G10400.1"/>
    <property type="gene ID" value="AT4G10400"/>
</dbReference>
<dbReference type="Gramene" id="AT4G10400.2">
    <molecule id="Q9SV82-1"/>
    <property type="protein sequence ID" value="AT4G10400.2"/>
    <property type="gene ID" value="AT4G10400"/>
</dbReference>
<dbReference type="Gramene" id="AT4G10400.3">
    <molecule id="Q9SV82-1"/>
    <property type="protein sequence ID" value="AT4G10400.3"/>
    <property type="gene ID" value="AT4G10400"/>
</dbReference>
<dbReference type="KEGG" id="ath:AT4G10400"/>
<dbReference type="Araport" id="AT4G10400"/>
<dbReference type="TAIR" id="AT4G10400"/>
<dbReference type="HOGENOM" id="CLU_010721_1_2_1"/>
<dbReference type="InParanoid" id="Q9SV82"/>
<dbReference type="OMA" id="YCSESEW"/>
<dbReference type="PhylomeDB" id="Q9SV82"/>
<dbReference type="PRO" id="PR:Q9SV82"/>
<dbReference type="Proteomes" id="UP000006548">
    <property type="component" value="Chromosome 4"/>
</dbReference>
<dbReference type="ExpressionAtlas" id="Q9SV82">
    <property type="expression patterns" value="baseline and differential"/>
</dbReference>
<dbReference type="CDD" id="cd22160">
    <property type="entry name" value="F-box_AtFBL13-like"/>
    <property type="match status" value="1"/>
</dbReference>
<dbReference type="Gene3D" id="3.80.10.10">
    <property type="entry name" value="Ribonuclease Inhibitor"/>
    <property type="match status" value="1"/>
</dbReference>
<dbReference type="InterPro" id="IPR036047">
    <property type="entry name" value="F-box-like_dom_sf"/>
</dbReference>
<dbReference type="InterPro" id="IPR053781">
    <property type="entry name" value="F-box_AtFBL13-like"/>
</dbReference>
<dbReference type="InterPro" id="IPR001810">
    <property type="entry name" value="F-box_dom"/>
</dbReference>
<dbReference type="InterPro" id="IPR006566">
    <property type="entry name" value="FBD"/>
</dbReference>
<dbReference type="InterPro" id="IPR050232">
    <property type="entry name" value="FBL13/AtMIF1-like"/>
</dbReference>
<dbReference type="InterPro" id="IPR032675">
    <property type="entry name" value="LRR_dom_sf"/>
</dbReference>
<dbReference type="InterPro" id="IPR055411">
    <property type="entry name" value="LRR_FXL15/At3g58940/PEG3-like"/>
</dbReference>
<dbReference type="PANTHER" id="PTHR31900">
    <property type="entry name" value="F-BOX/RNI SUPERFAMILY PROTEIN-RELATED"/>
    <property type="match status" value="1"/>
</dbReference>
<dbReference type="PANTHER" id="PTHR31900:SF28">
    <property type="entry name" value="FBD DOMAIN-CONTAINING PROTEIN"/>
    <property type="match status" value="1"/>
</dbReference>
<dbReference type="Pfam" id="PF00646">
    <property type="entry name" value="F-box"/>
    <property type="match status" value="1"/>
</dbReference>
<dbReference type="Pfam" id="PF08387">
    <property type="entry name" value="FBD"/>
    <property type="match status" value="1"/>
</dbReference>
<dbReference type="Pfam" id="PF24758">
    <property type="entry name" value="LRR_At5g56370"/>
    <property type="match status" value="1"/>
</dbReference>
<dbReference type="SMART" id="SM00579">
    <property type="entry name" value="FBD"/>
    <property type="match status" value="1"/>
</dbReference>
<dbReference type="SUPFAM" id="SSF81383">
    <property type="entry name" value="F-box domain"/>
    <property type="match status" value="1"/>
</dbReference>
<dbReference type="SUPFAM" id="SSF52047">
    <property type="entry name" value="RNI-like"/>
    <property type="match status" value="1"/>
</dbReference>
<dbReference type="PROSITE" id="PS50181">
    <property type="entry name" value="FBOX"/>
    <property type="match status" value="1"/>
</dbReference>
<protein>
    <recommendedName>
        <fullName>FBD-associated F-box protein At4g10400</fullName>
    </recommendedName>
</protein>
<gene>
    <name type="ordered locus">At4g10400</name>
    <name type="ORF">F24G24.200</name>
</gene>
<accession>Q9SV82</accession>
<reference key="1">
    <citation type="journal article" date="1999" name="Nature">
        <title>Sequence and analysis of chromosome 4 of the plant Arabidopsis thaliana.</title>
        <authorList>
            <person name="Mayer K.F.X."/>
            <person name="Schueller C."/>
            <person name="Wambutt R."/>
            <person name="Murphy G."/>
            <person name="Volckaert G."/>
            <person name="Pohl T."/>
            <person name="Duesterhoeft A."/>
            <person name="Stiekema W."/>
            <person name="Entian K.-D."/>
            <person name="Terryn N."/>
            <person name="Harris B."/>
            <person name="Ansorge W."/>
            <person name="Brandt P."/>
            <person name="Grivell L.A."/>
            <person name="Rieger M."/>
            <person name="Weichselgartner M."/>
            <person name="de Simone V."/>
            <person name="Obermaier B."/>
            <person name="Mache R."/>
            <person name="Mueller M."/>
            <person name="Kreis M."/>
            <person name="Delseny M."/>
            <person name="Puigdomenech P."/>
            <person name="Watson M."/>
            <person name="Schmidtheini T."/>
            <person name="Reichert B."/>
            <person name="Portetelle D."/>
            <person name="Perez-Alonso M."/>
            <person name="Boutry M."/>
            <person name="Bancroft I."/>
            <person name="Vos P."/>
            <person name="Hoheisel J."/>
            <person name="Zimmermann W."/>
            <person name="Wedler H."/>
            <person name="Ridley P."/>
            <person name="Langham S.-A."/>
            <person name="McCullagh B."/>
            <person name="Bilham L."/>
            <person name="Robben J."/>
            <person name="van der Schueren J."/>
            <person name="Grymonprez B."/>
            <person name="Chuang Y.-J."/>
            <person name="Vandenbussche F."/>
            <person name="Braeken M."/>
            <person name="Weltjens I."/>
            <person name="Voet M."/>
            <person name="Bastiaens I."/>
            <person name="Aert R."/>
            <person name="Defoor E."/>
            <person name="Weitzenegger T."/>
            <person name="Bothe G."/>
            <person name="Ramsperger U."/>
            <person name="Hilbert H."/>
            <person name="Braun M."/>
            <person name="Holzer E."/>
            <person name="Brandt A."/>
            <person name="Peters S."/>
            <person name="van Staveren M."/>
            <person name="Dirkse W."/>
            <person name="Mooijman P."/>
            <person name="Klein Lankhorst R."/>
            <person name="Rose M."/>
            <person name="Hauf J."/>
            <person name="Koetter P."/>
            <person name="Berneiser S."/>
            <person name="Hempel S."/>
            <person name="Feldpausch M."/>
            <person name="Lamberth S."/>
            <person name="Van den Daele H."/>
            <person name="De Keyser A."/>
            <person name="Buysshaert C."/>
            <person name="Gielen J."/>
            <person name="Villarroel R."/>
            <person name="De Clercq R."/>
            <person name="van Montagu M."/>
            <person name="Rogers J."/>
            <person name="Cronin A."/>
            <person name="Quail M.A."/>
            <person name="Bray-Allen S."/>
            <person name="Clark L."/>
            <person name="Doggett J."/>
            <person name="Hall S."/>
            <person name="Kay M."/>
            <person name="Lennard N."/>
            <person name="McLay K."/>
            <person name="Mayes R."/>
            <person name="Pettett A."/>
            <person name="Rajandream M.A."/>
            <person name="Lyne M."/>
            <person name="Benes V."/>
            <person name="Rechmann S."/>
            <person name="Borkova D."/>
            <person name="Bloecker H."/>
            <person name="Scharfe M."/>
            <person name="Grimm M."/>
            <person name="Loehnert T.-H."/>
            <person name="Dose S."/>
            <person name="de Haan M."/>
            <person name="Maarse A.C."/>
            <person name="Schaefer M."/>
            <person name="Mueller-Auer S."/>
            <person name="Gabel C."/>
            <person name="Fuchs M."/>
            <person name="Fartmann B."/>
            <person name="Granderath K."/>
            <person name="Dauner D."/>
            <person name="Herzl A."/>
            <person name="Neumann S."/>
            <person name="Argiriou A."/>
            <person name="Vitale D."/>
            <person name="Liguori R."/>
            <person name="Piravandi E."/>
            <person name="Massenet O."/>
            <person name="Quigley F."/>
            <person name="Clabauld G."/>
            <person name="Muendlein A."/>
            <person name="Felber R."/>
            <person name="Schnabl S."/>
            <person name="Hiller R."/>
            <person name="Schmidt W."/>
            <person name="Lecharny A."/>
            <person name="Aubourg S."/>
            <person name="Chefdor F."/>
            <person name="Cooke R."/>
            <person name="Berger C."/>
            <person name="Monfort A."/>
            <person name="Casacuberta E."/>
            <person name="Gibbons T."/>
            <person name="Weber N."/>
            <person name="Vandenbol M."/>
            <person name="Bargues M."/>
            <person name="Terol J."/>
            <person name="Torres A."/>
            <person name="Perez-Perez A."/>
            <person name="Purnelle B."/>
            <person name="Bent E."/>
            <person name="Johnson S."/>
            <person name="Tacon D."/>
            <person name="Jesse T."/>
            <person name="Heijnen L."/>
            <person name="Schwarz S."/>
            <person name="Scholler P."/>
            <person name="Heber S."/>
            <person name="Francs P."/>
            <person name="Bielke C."/>
            <person name="Frishman D."/>
            <person name="Haase D."/>
            <person name="Lemcke K."/>
            <person name="Mewes H.-W."/>
            <person name="Stocker S."/>
            <person name="Zaccaria P."/>
            <person name="Bevan M."/>
            <person name="Wilson R.K."/>
            <person name="de la Bastide M."/>
            <person name="Habermann K."/>
            <person name="Parnell L."/>
            <person name="Dedhia N."/>
            <person name="Gnoj L."/>
            <person name="Schutz K."/>
            <person name="Huang E."/>
            <person name="Spiegel L."/>
            <person name="Sekhon M."/>
            <person name="Murray J."/>
            <person name="Sheet P."/>
            <person name="Cordes M."/>
            <person name="Abu-Threideh J."/>
            <person name="Stoneking T."/>
            <person name="Kalicki J."/>
            <person name="Graves T."/>
            <person name="Harmon G."/>
            <person name="Edwards J."/>
            <person name="Latreille P."/>
            <person name="Courtney L."/>
            <person name="Cloud J."/>
            <person name="Abbott A."/>
            <person name="Scott K."/>
            <person name="Johnson D."/>
            <person name="Minx P."/>
            <person name="Bentley D."/>
            <person name="Fulton B."/>
            <person name="Miller N."/>
            <person name="Greco T."/>
            <person name="Kemp K."/>
            <person name="Kramer J."/>
            <person name="Fulton L."/>
            <person name="Mardis E."/>
            <person name="Dante M."/>
            <person name="Pepin K."/>
            <person name="Hillier L.W."/>
            <person name="Nelson J."/>
            <person name="Spieth J."/>
            <person name="Ryan E."/>
            <person name="Andrews S."/>
            <person name="Geisel C."/>
            <person name="Layman D."/>
            <person name="Du H."/>
            <person name="Ali J."/>
            <person name="Berghoff A."/>
            <person name="Jones K."/>
            <person name="Drone K."/>
            <person name="Cotton M."/>
            <person name="Joshu C."/>
            <person name="Antonoiu B."/>
            <person name="Zidanic M."/>
            <person name="Strong C."/>
            <person name="Sun H."/>
            <person name="Lamar B."/>
            <person name="Yordan C."/>
            <person name="Ma P."/>
            <person name="Zhong J."/>
            <person name="Preston R."/>
            <person name="Vil D."/>
            <person name="Shekher M."/>
            <person name="Matero A."/>
            <person name="Shah R."/>
            <person name="Swaby I.K."/>
            <person name="O'Shaughnessy A."/>
            <person name="Rodriguez M."/>
            <person name="Hoffman J."/>
            <person name="Till S."/>
            <person name="Granat S."/>
            <person name="Shohdy N."/>
            <person name="Hasegawa A."/>
            <person name="Hameed A."/>
            <person name="Lodhi M."/>
            <person name="Johnson A."/>
            <person name="Chen E."/>
            <person name="Marra M.A."/>
            <person name="Martienssen R."/>
            <person name="McCombie W.R."/>
        </authorList>
    </citation>
    <scope>NUCLEOTIDE SEQUENCE [LARGE SCALE GENOMIC DNA]</scope>
    <source>
        <strain>cv. Columbia</strain>
    </source>
</reference>
<reference key="2">
    <citation type="journal article" date="2017" name="Plant J.">
        <title>Araport11: a complete reannotation of the Arabidopsis thaliana reference genome.</title>
        <authorList>
            <person name="Cheng C.Y."/>
            <person name="Krishnakumar V."/>
            <person name="Chan A.P."/>
            <person name="Thibaud-Nissen F."/>
            <person name="Schobel S."/>
            <person name="Town C.D."/>
        </authorList>
    </citation>
    <scope>GENOME REANNOTATION</scope>
    <source>
        <strain>cv. Columbia</strain>
    </source>
</reference>
<reference key="3">
    <citation type="submission" date="2004-09" db="EMBL/GenBank/DDBJ databases">
        <authorList>
            <consortium name="Center for eukaryotic structural genomics (CESG)"/>
        </authorList>
    </citation>
    <scope>NUCLEOTIDE SEQUENCE [LARGE SCALE MRNA] OF 2-326 (ISOFORM 2)</scope>
    <source>
        <strain>cv. Columbia</strain>
    </source>
</reference>
<organism>
    <name type="scientific">Arabidopsis thaliana</name>
    <name type="common">Mouse-ear cress</name>
    <dbReference type="NCBI Taxonomy" id="3702"/>
    <lineage>
        <taxon>Eukaryota</taxon>
        <taxon>Viridiplantae</taxon>
        <taxon>Streptophyta</taxon>
        <taxon>Embryophyta</taxon>
        <taxon>Tracheophyta</taxon>
        <taxon>Spermatophyta</taxon>
        <taxon>Magnoliopsida</taxon>
        <taxon>eudicotyledons</taxon>
        <taxon>Gunneridae</taxon>
        <taxon>Pentapetalae</taxon>
        <taxon>rosids</taxon>
        <taxon>malvids</taxon>
        <taxon>Brassicales</taxon>
        <taxon>Brassicaceae</taxon>
        <taxon>Camelineae</taxon>
        <taxon>Arabidopsis</taxon>
    </lineage>
</organism>
<comment type="alternative products">
    <event type="alternative splicing"/>
    <isoform>
        <id>Q9SV82-1</id>
        <name>1</name>
        <sequence type="displayed"/>
    </isoform>
    <isoform>
        <id>Q9SV82-2</id>
        <name>2</name>
        <sequence type="described" ref="VSP_024320"/>
    </isoform>
</comment>
<sequence length="409" mass="47053">MDRISGLPDEVLVKILSFVPTKVAVSTSILSKRWEFLWMWLTKLKFGSKRYSESEFKRLQCFLDRNLPLHRAPVIESFRLVLSDSHFKPEDIRMWVVVAVSRYIRELKIYSSHYGEKQNILPSSLYTCKSLVILKLDGGVLLDVPRMVCLPSLKTLELKGVRYFKQGSLQRLLCNCPVLEDLVVNLSHHDNMGKLTVIVPSLQRLSLSTPSSREFVIDTPSLLSFQLVDRNDNSHTFLIENMPKLREAYINVPFADIKSLIGSITSVKRLAISSEVGYGEGFIFNHLEELTLWNKYSSNLLVWFLKNSPNLRELMLVSETDDHENLGMLSWNQPSIVPECMLSSLQKFTWFKYLGRPQDRDIAVYILKNACRLRTATIKSDTRLFTKLEMITELRLSSQASSTCELNFS</sequence>
<evidence type="ECO:0000255" key="1">
    <source>
        <dbReference type="PROSITE-ProRule" id="PRU00080"/>
    </source>
</evidence>
<evidence type="ECO:0000303" key="2">
    <source ref="3"/>
</evidence>
<evidence type="ECO:0000305" key="3"/>
<name>FBD40_ARATH</name>